<sequence>MKHPPCSVVAAATAILAVVLAIGGCSTEGDAGKASDTAATASNGDAAMLLKQATDAMRKVTGMHVRLAVTGDVPNLRVTKLEGDISNTPQTVATGSATLLVGNKSEDAKFVYVDGHLYSDLGQPGTYTDFGNGASIYNVSVLLDPNKGLANLLANLKDASVAGSQQADGVATTKITGNSSADDIATLAGSRLTSEDVKTVPTTVWIASDGSSHLVQIQIAPTKDTSVTLTMSDWGKQVTATKPV</sequence>
<keyword id="KW-1003">Cell membrane</keyword>
<keyword id="KW-0449">Lipoprotein</keyword>
<keyword id="KW-0472">Membrane</keyword>
<keyword id="KW-0564">Palmitate</keyword>
<keyword id="KW-1185">Reference proteome</keyword>
<keyword id="KW-0732">Signal</keyword>
<protein>
    <recommendedName>
        <fullName>Putative lipoprotein LprA</fullName>
    </recommendedName>
</protein>
<reference key="1">
    <citation type="journal article" date="2002" name="J. Bacteriol.">
        <title>Whole-genome comparison of Mycobacterium tuberculosis clinical and laboratory strains.</title>
        <authorList>
            <person name="Fleischmann R.D."/>
            <person name="Alland D."/>
            <person name="Eisen J.A."/>
            <person name="Carpenter L."/>
            <person name="White O."/>
            <person name="Peterson J.D."/>
            <person name="DeBoy R.T."/>
            <person name="Dodson R.J."/>
            <person name="Gwinn M.L."/>
            <person name="Haft D.H."/>
            <person name="Hickey E.K."/>
            <person name="Kolonay J.F."/>
            <person name="Nelson W.C."/>
            <person name="Umayam L.A."/>
            <person name="Ermolaeva M.D."/>
            <person name="Salzberg S.L."/>
            <person name="Delcher A."/>
            <person name="Utterback T.R."/>
            <person name="Weidman J.F."/>
            <person name="Khouri H.M."/>
            <person name="Gill J."/>
            <person name="Mikula A."/>
            <person name="Bishai W."/>
            <person name="Jacobs W.R. Jr."/>
            <person name="Venter J.C."/>
            <person name="Fraser C.M."/>
        </authorList>
    </citation>
    <scope>NUCLEOTIDE SEQUENCE [LARGE SCALE GENOMIC DNA]</scope>
    <source>
        <strain>CDC 1551 / Oshkosh</strain>
    </source>
</reference>
<gene>
    <name type="primary">lprA</name>
    <name type="ordered locus">MT1308</name>
</gene>
<organism>
    <name type="scientific">Mycobacterium tuberculosis (strain CDC 1551 / Oshkosh)</name>
    <dbReference type="NCBI Taxonomy" id="83331"/>
    <lineage>
        <taxon>Bacteria</taxon>
        <taxon>Bacillati</taxon>
        <taxon>Actinomycetota</taxon>
        <taxon>Actinomycetes</taxon>
        <taxon>Mycobacteriales</taxon>
        <taxon>Mycobacteriaceae</taxon>
        <taxon>Mycobacterium</taxon>
        <taxon>Mycobacterium tuberculosis complex</taxon>
    </lineage>
</organism>
<dbReference type="EMBL" id="AE000516">
    <property type="protein sequence ID" value="AAK45568.1"/>
    <property type="molecule type" value="Genomic_DNA"/>
</dbReference>
<dbReference type="PIR" id="F70754">
    <property type="entry name" value="F70754"/>
</dbReference>
<dbReference type="RefSeq" id="WP_003406562.1">
    <property type="nucleotide sequence ID" value="NZ_KK341227.1"/>
</dbReference>
<dbReference type="SMR" id="P9WK54"/>
<dbReference type="KEGG" id="mtc:MT1308"/>
<dbReference type="PATRIC" id="fig|83331.31.peg.1413"/>
<dbReference type="HOGENOM" id="CLU_074100_1_0_11"/>
<dbReference type="Proteomes" id="UP000001020">
    <property type="component" value="Chromosome"/>
</dbReference>
<dbReference type="GO" id="GO:0005886">
    <property type="term" value="C:plasma membrane"/>
    <property type="evidence" value="ECO:0007669"/>
    <property type="project" value="UniProtKB-SubCell"/>
</dbReference>
<dbReference type="CDD" id="cd16334">
    <property type="entry name" value="LppX-like"/>
    <property type="match status" value="1"/>
</dbReference>
<dbReference type="FunFam" id="2.50.20.20:FF:000003">
    <property type="entry name" value="Lipoprotein LprA"/>
    <property type="match status" value="1"/>
</dbReference>
<dbReference type="Gene3D" id="2.50.20.20">
    <property type="match status" value="1"/>
</dbReference>
<dbReference type="InterPro" id="IPR029046">
    <property type="entry name" value="LolA/LolB/LppX"/>
</dbReference>
<dbReference type="InterPro" id="IPR009830">
    <property type="entry name" value="LppX/LprAFG"/>
</dbReference>
<dbReference type="Pfam" id="PF07161">
    <property type="entry name" value="LppX_LprAFG"/>
    <property type="match status" value="1"/>
</dbReference>
<dbReference type="SUPFAM" id="SSF89392">
    <property type="entry name" value="Prokaryotic lipoproteins and lipoprotein localization factors"/>
    <property type="match status" value="1"/>
</dbReference>
<dbReference type="PROSITE" id="PS51257">
    <property type="entry name" value="PROKAR_LIPOPROTEIN"/>
    <property type="match status" value="1"/>
</dbReference>
<proteinExistence type="inferred from homology"/>
<evidence type="ECO:0000255" key="1">
    <source>
        <dbReference type="PROSITE-ProRule" id="PRU00303"/>
    </source>
</evidence>
<evidence type="ECO:0000305" key="2"/>
<accession>P9WK54</accession>
<accession>L0T656</accession>
<accession>Q11049</accession>
<comment type="subcellular location">
    <subcellularLocation>
        <location evidence="1">Cell membrane</location>
        <topology evidence="1">Lipid-anchor</topology>
    </subcellularLocation>
</comment>
<comment type="similarity">
    <text evidence="2">Belongs to the LppX/LprAFG lipoprotein family.</text>
</comment>
<name>LPRA_MYCTO</name>
<feature type="signal peptide" evidence="1">
    <location>
        <begin position="1"/>
        <end position="24"/>
    </location>
</feature>
<feature type="chain" id="PRO_0000427713" description="Putative lipoprotein LprA">
    <location>
        <begin position="25"/>
        <end position="244"/>
    </location>
</feature>
<feature type="lipid moiety-binding region" description="N-palmitoyl cysteine" evidence="1">
    <location>
        <position position="25"/>
    </location>
</feature>
<feature type="lipid moiety-binding region" description="S-diacylglycerol cysteine" evidence="1">
    <location>
        <position position="25"/>
    </location>
</feature>